<comment type="function">
    <text>Might act as an inhibitor of spontaneous calcium carbonate precipitation.</text>
</comment>
<comment type="subunit">
    <text>Cleaved to give an A chain and a B chain joined by a disulfide bond.</text>
</comment>
<comment type="subcellular location">
    <subcellularLocation>
        <location>Secreted</location>
    </subcellularLocation>
</comment>
<comment type="tissue specificity">
    <text>In pancreatic acinar cells.</text>
</comment>
<sequence length="175" mass="19334">MLPSLGLPRLSWMLLSCLMLLSQIQGENSQKELPSARISCPSGSMAYRSHCYALFKTPKTWMDADIACQKRPSGHLVSVLSGAEESFVASLVRNNLNTQSDIWIGLHDPTEGSEANAGGWEWISNDVLNYVAWETDPAAISSPGYCGSLSRSSGYLKWRDHNCNLNLPYVCKFTD</sequence>
<feature type="signal peptide" evidence="1">
    <location>
        <begin position="1"/>
        <end position="26"/>
    </location>
</feature>
<feature type="propeptide" id="PRO_0000017417" evidence="1">
    <location>
        <begin position="27"/>
        <end position="37"/>
    </location>
</feature>
<feature type="chain" id="PRO_0000017418" description="Lithostathine">
    <location>
        <begin position="38"/>
        <end position="175"/>
    </location>
</feature>
<feature type="chain" id="PRO_0000017419" description="Lithostathine A chain">
    <location>
        <begin position="38"/>
        <end position="138"/>
    </location>
</feature>
<feature type="chain" id="PRO_0000017420" description="Lithostathine B chain">
    <location>
        <begin position="141"/>
        <end position="175"/>
    </location>
</feature>
<feature type="domain" description="C-type lectin" evidence="2">
    <location>
        <begin position="38"/>
        <end position="173"/>
    </location>
</feature>
<feature type="disulfide bond" evidence="2">
    <location>
        <begin position="40"/>
        <end position="51"/>
    </location>
</feature>
<feature type="disulfide bond" evidence="2">
    <location>
        <begin position="68"/>
        <end position="171"/>
    </location>
</feature>
<feature type="disulfide bond" evidence="2">
    <location>
        <begin position="146"/>
        <end position="163"/>
    </location>
</feature>
<feature type="sequence conflict" description="In Ref. 3; AA sequence." evidence="3" ref="3">
    <original>EE</original>
    <variation>FF</variation>
    <location>
        <begin position="84"/>
        <end position="85"/>
    </location>
</feature>
<name>LITH_BOVIN</name>
<reference key="1">
    <citation type="journal article" date="1990" name="J. Clin. Invest.">
        <title>Enhanced expression of an exocrine pancreatic protein in Alzheimer's disease and the developing human brain.</title>
        <authorList>
            <person name="de la Monte S.M."/>
            <person name="Ozturk M."/>
            <person name="Wands J.R."/>
        </authorList>
    </citation>
    <scope>NUCLEOTIDE SEQUENCE [MRNA]</scope>
</reference>
<reference key="2">
    <citation type="journal article" date="1990" name="J. Protein Chem.">
        <title>Structural analysis of bovine pancreatic thread protein.</title>
        <authorList>
            <person name="Cai L."/>
            <person name="Harris W.R."/>
            <person name="Marshak D.R."/>
            <person name="Gross J."/>
            <person name="Crabb J.W."/>
        </authorList>
    </citation>
    <scope>PROTEIN SEQUENCE OF 38-138 AND 141-175</scope>
</reference>
<reference key="3">
    <citation type="journal article" date="1985" name="Proc. Natl. Acad. Sci. U.S.A.">
        <title>An unusual bovine pancreatic protein exhibiting pH-dependent globule-fibril transformation and unique amino acid sequence.</title>
        <authorList>
            <person name="Gross J."/>
            <person name="Brauer A.W."/>
            <person name="Bringhurst R.F."/>
            <person name="Corbett C."/>
            <person name="Margolies M.N."/>
        </authorList>
    </citation>
    <scope>PROTEIN SEQUENCE OF 38-85 AND 141-175</scope>
</reference>
<gene>
    <name type="primary">PTP</name>
</gene>
<proteinExistence type="evidence at protein level"/>
<keyword id="KW-0903">Direct protein sequencing</keyword>
<keyword id="KW-1015">Disulfide bond</keyword>
<keyword id="KW-0430">Lectin</keyword>
<keyword id="KW-1185">Reference proteome</keyword>
<keyword id="KW-0964">Secreted</keyword>
<keyword id="KW-0732">Signal</keyword>
<organism>
    <name type="scientific">Bos taurus</name>
    <name type="common">Bovine</name>
    <dbReference type="NCBI Taxonomy" id="9913"/>
    <lineage>
        <taxon>Eukaryota</taxon>
        <taxon>Metazoa</taxon>
        <taxon>Chordata</taxon>
        <taxon>Craniata</taxon>
        <taxon>Vertebrata</taxon>
        <taxon>Euteleostomi</taxon>
        <taxon>Mammalia</taxon>
        <taxon>Eutheria</taxon>
        <taxon>Laurasiatheria</taxon>
        <taxon>Artiodactyla</taxon>
        <taxon>Ruminantia</taxon>
        <taxon>Pecora</taxon>
        <taxon>Bovidae</taxon>
        <taxon>Bovinae</taxon>
        <taxon>Bos</taxon>
    </lineage>
</organism>
<dbReference type="EMBL" id="M59794">
    <property type="protein sequence ID" value="AAA30750.1"/>
    <property type="molecule type" value="mRNA"/>
</dbReference>
<dbReference type="PIR" id="A37194">
    <property type="entry name" value="A37194"/>
</dbReference>
<dbReference type="RefSeq" id="NP_991356.1">
    <property type="nucleotide sequence ID" value="NM_205787.1"/>
</dbReference>
<dbReference type="RefSeq" id="XP_005212802.1">
    <property type="nucleotide sequence ID" value="XM_005212745.2"/>
</dbReference>
<dbReference type="SMR" id="P23132"/>
<dbReference type="FunCoup" id="P23132">
    <property type="interactions" value="3"/>
</dbReference>
<dbReference type="STRING" id="9913.ENSBTAP00000073451"/>
<dbReference type="PaxDb" id="9913-ENSBTAP00000015040"/>
<dbReference type="Ensembl" id="ENSBTAT00000015040.4">
    <property type="protein sequence ID" value="ENSBTAP00000015040.3"/>
    <property type="gene ID" value="ENSBTAG00000011314.5"/>
</dbReference>
<dbReference type="GeneID" id="404114"/>
<dbReference type="KEGG" id="bta:404114"/>
<dbReference type="CTD" id="5068"/>
<dbReference type="VEuPathDB" id="HostDB:ENSBTAG00000011314"/>
<dbReference type="eggNOG" id="KOG4297">
    <property type="taxonomic scope" value="Eukaryota"/>
</dbReference>
<dbReference type="GeneTree" id="ENSGT00940000154447"/>
<dbReference type="HOGENOM" id="CLU_049894_18_0_1"/>
<dbReference type="InParanoid" id="P23132"/>
<dbReference type="OMA" id="PRISCPS"/>
<dbReference type="OrthoDB" id="418245at2759"/>
<dbReference type="Reactome" id="R-BTA-6803157">
    <property type="pathway name" value="Antimicrobial peptides"/>
</dbReference>
<dbReference type="Proteomes" id="UP000009136">
    <property type="component" value="Chromosome 11"/>
</dbReference>
<dbReference type="Bgee" id="ENSBTAG00000011314">
    <property type="expression patterns" value="Expressed in urinary bladder and 21 other cell types or tissues"/>
</dbReference>
<dbReference type="GO" id="GO:0005615">
    <property type="term" value="C:extracellular space"/>
    <property type="evidence" value="ECO:0000318"/>
    <property type="project" value="GO_Central"/>
</dbReference>
<dbReference type="GO" id="GO:0070492">
    <property type="term" value="F:oligosaccharide binding"/>
    <property type="evidence" value="ECO:0000318"/>
    <property type="project" value="GO_Central"/>
</dbReference>
<dbReference type="GO" id="GO:0042834">
    <property type="term" value="F:peptidoglycan binding"/>
    <property type="evidence" value="ECO:0000318"/>
    <property type="project" value="GO_Central"/>
</dbReference>
<dbReference type="GO" id="GO:0038023">
    <property type="term" value="F:signaling receptor activity"/>
    <property type="evidence" value="ECO:0000318"/>
    <property type="project" value="GO_Central"/>
</dbReference>
<dbReference type="GO" id="GO:0061844">
    <property type="term" value="P:antimicrobial humoral immune response mediated by antimicrobial peptide"/>
    <property type="evidence" value="ECO:0000318"/>
    <property type="project" value="GO_Central"/>
</dbReference>
<dbReference type="GO" id="GO:0008284">
    <property type="term" value="P:positive regulation of cell population proliferation"/>
    <property type="evidence" value="ECO:0000318"/>
    <property type="project" value="GO_Central"/>
</dbReference>
<dbReference type="GO" id="GO:0043434">
    <property type="term" value="P:response to peptide hormone"/>
    <property type="evidence" value="ECO:0000318"/>
    <property type="project" value="GO_Central"/>
</dbReference>
<dbReference type="FunFam" id="3.10.100.10:FF:000015">
    <property type="entry name" value="C-type lectin Cal"/>
    <property type="match status" value="1"/>
</dbReference>
<dbReference type="Gene3D" id="3.10.100.10">
    <property type="entry name" value="Mannose-Binding Protein A, subunit A"/>
    <property type="match status" value="1"/>
</dbReference>
<dbReference type="InterPro" id="IPR001304">
    <property type="entry name" value="C-type_lectin-like"/>
</dbReference>
<dbReference type="InterPro" id="IPR016186">
    <property type="entry name" value="C-type_lectin-like/link_sf"/>
</dbReference>
<dbReference type="InterPro" id="IPR050111">
    <property type="entry name" value="C-type_lectin/snaclec_domain"/>
</dbReference>
<dbReference type="InterPro" id="IPR018378">
    <property type="entry name" value="C-type_lectin_CS"/>
</dbReference>
<dbReference type="InterPro" id="IPR016187">
    <property type="entry name" value="CTDL_fold"/>
</dbReference>
<dbReference type="PANTHER" id="PTHR22803">
    <property type="entry name" value="MANNOSE, PHOSPHOLIPASE, LECTIN RECEPTOR RELATED"/>
    <property type="match status" value="1"/>
</dbReference>
<dbReference type="Pfam" id="PF00059">
    <property type="entry name" value="Lectin_C"/>
    <property type="match status" value="1"/>
</dbReference>
<dbReference type="PRINTS" id="PR01504">
    <property type="entry name" value="PNCREATITSAP"/>
</dbReference>
<dbReference type="SMART" id="SM00034">
    <property type="entry name" value="CLECT"/>
    <property type="match status" value="1"/>
</dbReference>
<dbReference type="SUPFAM" id="SSF56436">
    <property type="entry name" value="C-type lectin-like"/>
    <property type="match status" value="1"/>
</dbReference>
<dbReference type="PROSITE" id="PS00615">
    <property type="entry name" value="C_TYPE_LECTIN_1"/>
    <property type="match status" value="1"/>
</dbReference>
<dbReference type="PROSITE" id="PS50041">
    <property type="entry name" value="C_TYPE_LECTIN_2"/>
    <property type="match status" value="1"/>
</dbReference>
<accession>P23132</accession>
<evidence type="ECO:0000255" key="1"/>
<evidence type="ECO:0000255" key="2">
    <source>
        <dbReference type="PROSITE-ProRule" id="PRU00040"/>
    </source>
</evidence>
<evidence type="ECO:0000305" key="3"/>
<protein>
    <recommendedName>
        <fullName>Lithostathine</fullName>
    </recommendedName>
    <alternativeName>
        <fullName>Islet cells regeneration factor</fullName>
        <shortName>ICRF</shortName>
    </alternativeName>
    <alternativeName>
        <fullName>Islet of Langerhans regenerating protein</fullName>
        <shortName>REG</shortName>
    </alternativeName>
    <alternativeName>
        <fullName>Pancreatic stone protein</fullName>
        <shortName>PSP</shortName>
    </alternativeName>
    <alternativeName>
        <fullName>Pancreatic thread protein</fullName>
        <shortName>PTP</shortName>
    </alternativeName>
    <component>
        <recommendedName>
            <fullName>Lithostathine A chain</fullName>
        </recommendedName>
    </component>
    <component>
        <recommendedName>
            <fullName>Lithostathine B chain</fullName>
        </recommendedName>
    </component>
</protein>